<keyword id="KW-0007">Acetylation</keyword>
<keyword id="KW-0963">Cytoplasm</keyword>
<keyword id="KW-0507">mRNA processing</keyword>
<keyword id="KW-0508">mRNA splicing</keyword>
<keyword id="KW-0509">mRNA transport</keyword>
<keyword id="KW-0866">Nonsense-mediated mRNA decay</keyword>
<keyword id="KW-0539">Nucleus</keyword>
<keyword id="KW-1185">Reference proteome</keyword>
<keyword id="KW-0694">RNA-binding</keyword>
<keyword id="KW-0810">Translation regulation</keyword>
<keyword id="KW-0813">Transport</keyword>
<protein>
    <recommendedName>
        <fullName evidence="7">Protein mago nashi homolog</fullName>
        <shortName evidence="6">AtMAGO</shortName>
    </recommendedName>
</protein>
<gene>
    <name evidence="6" type="primary">MAGO</name>
    <name evidence="10" type="ordered locus">At1g02140</name>
    <name evidence="11" type="ORF">T7I23.7</name>
</gene>
<sequence length="150" mass="17458">MAAEEATEFYLRYYVGHKGKFGHEFLEFEFREDGKLRYANNSNYKNDTIIRKEVFLTPAVLKECKRIVSESEILKEDDNNWPEPDRVGKQELEIVLGNEHISFATSKIGSLVDCQSSNDPEGLRIFYYLVQDLKCLVFSLISLHFKIKPI</sequence>
<comment type="function">
    <text evidence="1 4 5">Core component of the splicing-dependent multiprotein exon junction complex (EJC) deposited at splice junctions on mRNAs. The EJC is a dynamic structure consisting of core proteins and several peripheral nuclear and cytoplasmic associated factors that join the complex only transiently either during EJC assembly or during subsequent mRNA metabolism. The EJC marks the position of the exon-exon junction in the mature mRNA for the gene expression machinery and the core components remain bound to spliced mRNAs throughout all stages of mRNA metabolism thereby influencing downstream processes including nuclear mRNA export, subcellular mRNA localization, translation efficiency and nonsense-mediated mRNA decay (NMD). The MAGO-Y14 heterodimer inhibits the ATPase activity of EIF4A3, thereby trapping the ATP-bound EJC core onto spliced mRNA in a stable conformation. The MAGO-Y14 heterodimer interacts with the EJC key regulator PYM leading to EJC disassembly in the cytoplasm (By similarity). Can increase in vitro the expression from reporter constructs that contain leader introns required for the expression of different genes. In association with MAGO and PYM, participates in intron-mediated enhancement of gene expression (PubMed:21676911). The MAGO-Y14 heterodimer works synergistically with the NMD pathway to regulate male gametophyte development (PubMed:26867216).</text>
</comment>
<comment type="subunit">
    <text evidence="2 3 4 5 8 9">Heterodimer with Y14 (PubMed:19435936, PubMed:26867216). Part of the mRNA splicing-dependent exon junction complex (EJC); the core complex contains MLN51/CASC3, EIF4A3, MAGO and Y14 (Probable). Interacts with PYM (PubMed:16953428, PubMed:21676911). The interaction with PYM is direct and dissociates the EJC from spliced mRNAs (Probable). Interacts with EIF4A3 (PubMed:26867216).</text>
</comment>
<comment type="interaction">
    <interactant intactId="EBI-4443810">
        <id>O23676</id>
    </interactant>
    <interactant intactId="EBI-25506855">
        <id>O23160</id>
        <label>MYB73</label>
    </interactant>
    <organismsDiffer>false</organismsDiffer>
    <experiments>3</experiments>
</comment>
<comment type="subcellular location">
    <subcellularLocation>
        <location evidence="3">Nucleus</location>
        <location evidence="3">Nucleolus</location>
    </subcellularLocation>
    <subcellularLocation>
        <location evidence="3">Nucleus speckle</location>
    </subcellularLocation>
    <subcellularLocation>
        <location evidence="5">Nucleus</location>
    </subcellularLocation>
    <subcellularLocation>
        <location evidence="5">Cytoplasm</location>
        <location evidence="5">P-body</location>
    </subcellularLocation>
    <subcellularLocation>
        <location evidence="1">Cytoplasm</location>
    </subcellularLocation>
    <text evidence="1">Nucleocytoplasmic shuttling protein. Travels to the cytoplasm as part of the exon junction complex (EJC) bound to mRNA.</text>
</comment>
<comment type="tissue specificity">
    <text evidence="4">Expressed in root and shoot meristems, cotyledons, vascular tissues of leaves, receptacle of flowers and siliques, and pollen grains.</text>
</comment>
<comment type="disruption phenotype">
    <text evidence="5">Male sterility due to pollen abortion after meiosis.</text>
</comment>
<comment type="similarity">
    <text evidence="7">Belongs to the mago nashi family.</text>
</comment>
<accession>O23676</accession>
<accession>A0A023T774</accession>
<name>MGN_ARATH</name>
<dbReference type="EMBL" id="KF051000">
    <property type="protein sequence ID" value="AHX83786.1"/>
    <property type="molecule type" value="mRNA"/>
</dbReference>
<dbReference type="EMBL" id="U89959">
    <property type="protein sequence ID" value="AAC24371.1"/>
    <property type="molecule type" value="Genomic_DNA"/>
</dbReference>
<dbReference type="EMBL" id="CP002684">
    <property type="protein sequence ID" value="AEE27388.1"/>
    <property type="molecule type" value="Genomic_DNA"/>
</dbReference>
<dbReference type="EMBL" id="AY065157">
    <property type="protein sequence ID" value="AAL38333.1"/>
    <property type="molecule type" value="mRNA"/>
</dbReference>
<dbReference type="EMBL" id="AY114602">
    <property type="protein sequence ID" value="AAM47921.1"/>
    <property type="molecule type" value="mRNA"/>
</dbReference>
<dbReference type="EMBL" id="AY087464">
    <property type="protein sequence ID" value="AAM65009.1"/>
    <property type="molecule type" value="mRNA"/>
</dbReference>
<dbReference type="PIR" id="C86153">
    <property type="entry name" value="C86153"/>
</dbReference>
<dbReference type="RefSeq" id="NP_171716.1">
    <property type="nucleotide sequence ID" value="NM_100094.3"/>
</dbReference>
<dbReference type="SMR" id="O23676"/>
<dbReference type="BioGRID" id="22800">
    <property type="interactions" value="22"/>
</dbReference>
<dbReference type="FunCoup" id="O23676">
    <property type="interactions" value="4231"/>
</dbReference>
<dbReference type="IntAct" id="O23676">
    <property type="interactions" value="8"/>
</dbReference>
<dbReference type="STRING" id="3702.O23676"/>
<dbReference type="iPTMnet" id="O23676"/>
<dbReference type="PaxDb" id="3702-AT1G02140.1"/>
<dbReference type="ProteomicsDB" id="250929"/>
<dbReference type="EnsemblPlants" id="AT1G02140.1">
    <property type="protein sequence ID" value="AT1G02140.1"/>
    <property type="gene ID" value="AT1G02140"/>
</dbReference>
<dbReference type="GeneID" id="837560"/>
<dbReference type="Gramene" id="AT1G02140.1">
    <property type="protein sequence ID" value="AT1G02140.1"/>
    <property type="gene ID" value="AT1G02140"/>
</dbReference>
<dbReference type="KEGG" id="ath:AT1G02140"/>
<dbReference type="Araport" id="AT1G02140"/>
<dbReference type="TAIR" id="AT1G02140">
    <property type="gene designation" value="MAGO"/>
</dbReference>
<dbReference type="eggNOG" id="KOG3392">
    <property type="taxonomic scope" value="Eukaryota"/>
</dbReference>
<dbReference type="HOGENOM" id="CLU_109497_1_1_1"/>
<dbReference type="InParanoid" id="O23676"/>
<dbReference type="OMA" id="VQDVKCF"/>
<dbReference type="OrthoDB" id="6495301at2759"/>
<dbReference type="PhylomeDB" id="O23676"/>
<dbReference type="PRO" id="PR:O23676"/>
<dbReference type="Proteomes" id="UP000006548">
    <property type="component" value="Chromosome 1"/>
</dbReference>
<dbReference type="ExpressionAtlas" id="O23676">
    <property type="expression patterns" value="baseline and differential"/>
</dbReference>
<dbReference type="GO" id="GO:0035145">
    <property type="term" value="C:exon-exon junction complex"/>
    <property type="evidence" value="ECO:0000353"/>
    <property type="project" value="TAIR"/>
</dbReference>
<dbReference type="GO" id="GO:0016607">
    <property type="term" value="C:nuclear speck"/>
    <property type="evidence" value="ECO:0000314"/>
    <property type="project" value="TAIR"/>
</dbReference>
<dbReference type="GO" id="GO:0005730">
    <property type="term" value="C:nucleolus"/>
    <property type="evidence" value="ECO:0007005"/>
    <property type="project" value="TAIR"/>
</dbReference>
<dbReference type="GO" id="GO:0005654">
    <property type="term" value="C:nucleoplasm"/>
    <property type="evidence" value="ECO:0007005"/>
    <property type="project" value="TAIR"/>
</dbReference>
<dbReference type="GO" id="GO:0000932">
    <property type="term" value="C:P-body"/>
    <property type="evidence" value="ECO:0007669"/>
    <property type="project" value="UniProtKB-SubCell"/>
</dbReference>
<dbReference type="GO" id="GO:0003723">
    <property type="term" value="F:RNA binding"/>
    <property type="evidence" value="ECO:0007669"/>
    <property type="project" value="UniProtKB-KW"/>
</dbReference>
<dbReference type="GO" id="GO:0009793">
    <property type="term" value="P:embryo development ending in seed dormancy"/>
    <property type="evidence" value="ECO:0000315"/>
    <property type="project" value="TAIR"/>
</dbReference>
<dbReference type="GO" id="GO:0006397">
    <property type="term" value="P:mRNA processing"/>
    <property type="evidence" value="ECO:0007669"/>
    <property type="project" value="UniProtKB-KW"/>
</dbReference>
<dbReference type="GO" id="GO:0051028">
    <property type="term" value="P:mRNA transport"/>
    <property type="evidence" value="ECO:0007669"/>
    <property type="project" value="UniProtKB-KW"/>
</dbReference>
<dbReference type="GO" id="GO:0000184">
    <property type="term" value="P:nuclear-transcribed mRNA catabolic process, nonsense-mediated decay"/>
    <property type="evidence" value="ECO:0007669"/>
    <property type="project" value="UniProtKB-KW"/>
</dbReference>
<dbReference type="GO" id="GO:0010183">
    <property type="term" value="P:pollen tube guidance"/>
    <property type="evidence" value="ECO:0000315"/>
    <property type="project" value="TAIR"/>
</dbReference>
<dbReference type="GO" id="GO:0010628">
    <property type="term" value="P:positive regulation of gene expression"/>
    <property type="evidence" value="ECO:0000270"/>
    <property type="project" value="TAIR"/>
</dbReference>
<dbReference type="GO" id="GO:0006417">
    <property type="term" value="P:regulation of translation"/>
    <property type="evidence" value="ECO:0007669"/>
    <property type="project" value="UniProtKB-KW"/>
</dbReference>
<dbReference type="GO" id="GO:0008380">
    <property type="term" value="P:RNA splicing"/>
    <property type="evidence" value="ECO:0007669"/>
    <property type="project" value="UniProtKB-KW"/>
</dbReference>
<dbReference type="CDD" id="cd11295">
    <property type="entry name" value="Mago_nashi"/>
    <property type="match status" value="1"/>
</dbReference>
<dbReference type="FunFam" id="3.30.1560.10:FF:000001">
    <property type="entry name" value="Protein mago nashi homolog"/>
    <property type="match status" value="1"/>
</dbReference>
<dbReference type="Gene3D" id="3.30.1560.10">
    <property type="entry name" value="Mago nashi"/>
    <property type="match status" value="1"/>
</dbReference>
<dbReference type="InterPro" id="IPR004023">
    <property type="entry name" value="Mago_nashi"/>
</dbReference>
<dbReference type="InterPro" id="IPR036605">
    <property type="entry name" value="Mago_nashi_sf"/>
</dbReference>
<dbReference type="PANTHER" id="PTHR12638:SF0">
    <property type="entry name" value="MAGO HOMOLOG, EXON JUNCTION COMPLEX SUBUNIT-RELATED"/>
    <property type="match status" value="1"/>
</dbReference>
<dbReference type="PANTHER" id="PTHR12638">
    <property type="entry name" value="PROTEIN MAGO NASHI HOMOLOG"/>
    <property type="match status" value="1"/>
</dbReference>
<dbReference type="Pfam" id="PF02792">
    <property type="entry name" value="Mago_nashi"/>
    <property type="match status" value="1"/>
</dbReference>
<dbReference type="SUPFAM" id="SSF89817">
    <property type="entry name" value="Mago nashi protein"/>
    <property type="match status" value="1"/>
</dbReference>
<reference key="1">
    <citation type="journal article" date="2014" name="PLoS ONE">
        <title>Slow co-evolution of the MAGO and Y14 protein families is required for the maintenance of their obligate heterodimerization mode.</title>
        <authorList>
            <person name="Gong P."/>
            <person name="Zhao M."/>
            <person name="He C."/>
        </authorList>
    </citation>
    <scope>NUCLEOTIDE SEQUENCE [MRNA]</scope>
    <scope>INTERACTION WITH Y14</scope>
</reference>
<reference key="2">
    <citation type="journal article" date="2000" name="Nature">
        <title>Sequence and analysis of chromosome 1 of the plant Arabidopsis thaliana.</title>
        <authorList>
            <person name="Theologis A."/>
            <person name="Ecker J.R."/>
            <person name="Palm C.J."/>
            <person name="Federspiel N.A."/>
            <person name="Kaul S."/>
            <person name="White O."/>
            <person name="Alonso J."/>
            <person name="Altafi H."/>
            <person name="Araujo R."/>
            <person name="Bowman C.L."/>
            <person name="Brooks S.Y."/>
            <person name="Buehler E."/>
            <person name="Chan A."/>
            <person name="Chao Q."/>
            <person name="Chen H."/>
            <person name="Cheuk R.F."/>
            <person name="Chin C.W."/>
            <person name="Chung M.K."/>
            <person name="Conn L."/>
            <person name="Conway A.B."/>
            <person name="Conway A.R."/>
            <person name="Creasy T.H."/>
            <person name="Dewar K."/>
            <person name="Dunn P."/>
            <person name="Etgu P."/>
            <person name="Feldblyum T.V."/>
            <person name="Feng J.-D."/>
            <person name="Fong B."/>
            <person name="Fujii C.Y."/>
            <person name="Gill J.E."/>
            <person name="Goldsmith A.D."/>
            <person name="Haas B."/>
            <person name="Hansen N.F."/>
            <person name="Hughes B."/>
            <person name="Huizar L."/>
            <person name="Hunter J.L."/>
            <person name="Jenkins J."/>
            <person name="Johnson-Hopson C."/>
            <person name="Khan S."/>
            <person name="Khaykin E."/>
            <person name="Kim C.J."/>
            <person name="Koo H.L."/>
            <person name="Kremenetskaia I."/>
            <person name="Kurtz D.B."/>
            <person name="Kwan A."/>
            <person name="Lam B."/>
            <person name="Langin-Hooper S."/>
            <person name="Lee A."/>
            <person name="Lee J.M."/>
            <person name="Lenz C.A."/>
            <person name="Li J.H."/>
            <person name="Li Y.-P."/>
            <person name="Lin X."/>
            <person name="Liu S.X."/>
            <person name="Liu Z.A."/>
            <person name="Luros J.S."/>
            <person name="Maiti R."/>
            <person name="Marziali A."/>
            <person name="Militscher J."/>
            <person name="Miranda M."/>
            <person name="Nguyen M."/>
            <person name="Nierman W.C."/>
            <person name="Osborne B.I."/>
            <person name="Pai G."/>
            <person name="Peterson J."/>
            <person name="Pham P.K."/>
            <person name="Rizzo M."/>
            <person name="Rooney T."/>
            <person name="Rowley D."/>
            <person name="Sakano H."/>
            <person name="Salzberg S.L."/>
            <person name="Schwartz J.R."/>
            <person name="Shinn P."/>
            <person name="Southwick A.M."/>
            <person name="Sun H."/>
            <person name="Tallon L.J."/>
            <person name="Tambunga G."/>
            <person name="Toriumi M.J."/>
            <person name="Town C.D."/>
            <person name="Utterback T."/>
            <person name="Van Aken S."/>
            <person name="Vaysberg M."/>
            <person name="Vysotskaia V.S."/>
            <person name="Walker M."/>
            <person name="Wu D."/>
            <person name="Yu G."/>
            <person name="Fraser C.M."/>
            <person name="Venter J.C."/>
            <person name="Davis R.W."/>
        </authorList>
    </citation>
    <scope>NUCLEOTIDE SEQUENCE [LARGE SCALE GENOMIC DNA]</scope>
    <source>
        <strain>cv. Columbia</strain>
    </source>
</reference>
<reference key="3">
    <citation type="journal article" date="2017" name="Plant J.">
        <title>Araport11: a complete reannotation of the Arabidopsis thaliana reference genome.</title>
        <authorList>
            <person name="Cheng C.Y."/>
            <person name="Krishnakumar V."/>
            <person name="Chan A.P."/>
            <person name="Thibaud-Nissen F."/>
            <person name="Schobel S."/>
            <person name="Town C.D."/>
        </authorList>
    </citation>
    <scope>GENOME REANNOTATION</scope>
    <source>
        <strain>cv. Columbia</strain>
    </source>
</reference>
<reference key="4">
    <citation type="journal article" date="2003" name="Science">
        <title>Empirical analysis of transcriptional activity in the Arabidopsis genome.</title>
        <authorList>
            <person name="Yamada K."/>
            <person name="Lim J."/>
            <person name="Dale J.M."/>
            <person name="Chen H."/>
            <person name="Shinn P."/>
            <person name="Palm C.J."/>
            <person name="Southwick A.M."/>
            <person name="Wu H.C."/>
            <person name="Kim C.J."/>
            <person name="Nguyen M."/>
            <person name="Pham P.K."/>
            <person name="Cheuk R.F."/>
            <person name="Karlin-Newmann G."/>
            <person name="Liu S.X."/>
            <person name="Lam B."/>
            <person name="Sakano H."/>
            <person name="Wu T."/>
            <person name="Yu G."/>
            <person name="Miranda M."/>
            <person name="Quach H.L."/>
            <person name="Tripp M."/>
            <person name="Chang C.H."/>
            <person name="Lee J.M."/>
            <person name="Toriumi M.J."/>
            <person name="Chan M.M."/>
            <person name="Tang C.C."/>
            <person name="Onodera C.S."/>
            <person name="Deng J.M."/>
            <person name="Akiyama K."/>
            <person name="Ansari Y."/>
            <person name="Arakawa T."/>
            <person name="Banh J."/>
            <person name="Banno F."/>
            <person name="Bowser L."/>
            <person name="Brooks S.Y."/>
            <person name="Carninci P."/>
            <person name="Chao Q."/>
            <person name="Choy N."/>
            <person name="Enju A."/>
            <person name="Goldsmith A.D."/>
            <person name="Gurjal M."/>
            <person name="Hansen N.F."/>
            <person name="Hayashizaki Y."/>
            <person name="Johnson-Hopson C."/>
            <person name="Hsuan V.W."/>
            <person name="Iida K."/>
            <person name="Karnes M."/>
            <person name="Khan S."/>
            <person name="Koesema E."/>
            <person name="Ishida J."/>
            <person name="Jiang P.X."/>
            <person name="Jones T."/>
            <person name="Kawai J."/>
            <person name="Kamiya A."/>
            <person name="Meyers C."/>
            <person name="Nakajima M."/>
            <person name="Narusaka M."/>
            <person name="Seki M."/>
            <person name="Sakurai T."/>
            <person name="Satou M."/>
            <person name="Tamse R."/>
            <person name="Vaysberg M."/>
            <person name="Wallender E.K."/>
            <person name="Wong C."/>
            <person name="Yamamura Y."/>
            <person name="Yuan S."/>
            <person name="Shinozaki K."/>
            <person name="Davis R.W."/>
            <person name="Theologis A."/>
            <person name="Ecker J.R."/>
        </authorList>
    </citation>
    <scope>NUCLEOTIDE SEQUENCE [LARGE SCALE MRNA]</scope>
    <source>
        <strain>cv. Columbia</strain>
    </source>
</reference>
<reference key="5">
    <citation type="submission" date="2002-03" db="EMBL/GenBank/DDBJ databases">
        <title>Full-length cDNA from Arabidopsis thaliana.</title>
        <authorList>
            <person name="Brover V.V."/>
            <person name="Troukhan M.E."/>
            <person name="Alexandrov N.A."/>
            <person name="Lu Y.-P."/>
            <person name="Flavell R.B."/>
            <person name="Feldmann K.A."/>
        </authorList>
    </citation>
    <scope>NUCLEOTIDE SEQUENCE [LARGE SCALE MRNA]</scope>
</reference>
<reference key="6">
    <citation type="journal article" date="2007" name="Planta">
        <title>Biochemical and cellular characterization of the plant ortholog of PYM, a protein that interacts with the exon junction complex core proteins Mago and Y14.</title>
        <authorList>
            <person name="Park N.I."/>
            <person name="Muench D.G."/>
        </authorList>
    </citation>
    <scope>INTERACTION WITH PYM</scope>
</reference>
<reference key="7">
    <citation type="journal article" date="2009" name="Plant Cell">
        <title>Dynamic behavior of Arabidopsis eIF4A-III, putative core protein of exon junction complex: fast relocation to nucleolus and splicing speckles under hypoxia.</title>
        <authorList>
            <person name="Koroleva O.A."/>
            <person name="Calder G."/>
            <person name="Pendle A.F."/>
            <person name="Kim S.H."/>
            <person name="Lewandowska D."/>
            <person name="Simpson C.G."/>
            <person name="Jones I.M."/>
            <person name="Brown J.W.S."/>
            <person name="Shaw P.J."/>
        </authorList>
    </citation>
    <scope>INTERACTION WITH Y14</scope>
    <scope>SUBCELLULAR LOCATION</scope>
</reference>
<reference key="8">
    <citation type="journal article" date="2011" name="J. Exp. Bot.">
        <title>Functional interconnections of Arabidopsis exon junction complex proteins and genes at multiple steps of gene expression.</title>
        <authorList>
            <person name="Mufarrege E.F."/>
            <person name="Gonzalez D.H."/>
            <person name="Curi G.C."/>
        </authorList>
    </citation>
    <scope>INTERACTION WITH PYM</scope>
    <scope>TISSUE SPECIFICITY</scope>
</reference>
<reference key="9">
    <citation type="journal article" date="2012" name="Mol. Cell. Proteomics">
        <title>Comparative large-scale characterisation of plant vs. mammal proteins reveals similar and idiosyncratic N-alpha acetylation features.</title>
        <authorList>
            <person name="Bienvenut W.V."/>
            <person name="Sumpton D."/>
            <person name="Martinez A."/>
            <person name="Lilla S."/>
            <person name="Espagne C."/>
            <person name="Meinnel T."/>
            <person name="Giglione C."/>
        </authorList>
    </citation>
    <scope>ACETYLATION [LARGE SCALE ANALYSIS] AT ALA-2</scope>
    <scope>CLEAVAGE OF INITIATOR METHIONINE [LARGE SCALE ANALYSIS]</scope>
    <scope>IDENTIFICATION BY MASS SPECTROMETRY [LARGE SCALE ANALYSIS]</scope>
</reference>
<reference key="10">
    <citation type="journal article" date="2016" name="PLoS ONE">
        <title>A new mutation, hap1-2, reveals a C terminal domain function in AtMago protein and its biological effects in male gametophyte development in Arabidopsis thaliana.</title>
        <authorList>
            <person name="Cilano K."/>
            <person name="Mazanek Z."/>
            <person name="Khan M."/>
            <person name="Metcalfe S."/>
            <person name="Zhang X.N."/>
        </authorList>
    </citation>
    <scope>FUNCTION</scope>
    <scope>INTERACTION WITH EIF4A3 AND Y14</scope>
    <scope>SUBCELLULAR LOCATION</scope>
    <scope>DISRUPTION PHENOTYPE</scope>
</reference>
<proteinExistence type="evidence at protein level"/>
<feature type="initiator methionine" description="Removed" evidence="12">
    <location>
        <position position="1"/>
    </location>
</feature>
<feature type="chain" id="PRO_0000174152" description="Protein mago nashi homolog">
    <location>
        <begin position="2"/>
        <end position="150"/>
    </location>
</feature>
<feature type="modified residue" description="N-acetylalanine" evidence="12">
    <location>
        <position position="2"/>
    </location>
</feature>
<organism>
    <name type="scientific">Arabidopsis thaliana</name>
    <name type="common">Mouse-ear cress</name>
    <dbReference type="NCBI Taxonomy" id="3702"/>
    <lineage>
        <taxon>Eukaryota</taxon>
        <taxon>Viridiplantae</taxon>
        <taxon>Streptophyta</taxon>
        <taxon>Embryophyta</taxon>
        <taxon>Tracheophyta</taxon>
        <taxon>Spermatophyta</taxon>
        <taxon>Magnoliopsida</taxon>
        <taxon>eudicotyledons</taxon>
        <taxon>Gunneridae</taxon>
        <taxon>Pentapetalae</taxon>
        <taxon>rosids</taxon>
        <taxon>malvids</taxon>
        <taxon>Brassicales</taxon>
        <taxon>Brassicaceae</taxon>
        <taxon>Camelineae</taxon>
        <taxon>Arabidopsis</taxon>
    </lineage>
</organism>
<evidence type="ECO:0000250" key="1">
    <source>
        <dbReference type="UniProtKB" id="P61326"/>
    </source>
</evidence>
<evidence type="ECO:0000269" key="2">
    <source>
    </source>
</evidence>
<evidence type="ECO:0000269" key="3">
    <source>
    </source>
</evidence>
<evidence type="ECO:0000269" key="4">
    <source>
    </source>
</evidence>
<evidence type="ECO:0000269" key="5">
    <source>
    </source>
</evidence>
<evidence type="ECO:0000303" key="6">
    <source>
    </source>
</evidence>
<evidence type="ECO:0000305" key="7"/>
<evidence type="ECO:0000305" key="8">
    <source>
    </source>
</evidence>
<evidence type="ECO:0000305" key="9">
    <source>
    </source>
</evidence>
<evidence type="ECO:0000312" key="10">
    <source>
        <dbReference type="Araport" id="AT1G02140"/>
    </source>
</evidence>
<evidence type="ECO:0000312" key="11">
    <source>
        <dbReference type="EMBL" id="AAC24371.1"/>
    </source>
</evidence>
<evidence type="ECO:0007744" key="12">
    <source>
    </source>
</evidence>